<gene>
    <name evidence="1" type="primary">mraY</name>
    <name type="ordered locus">SGR_5418</name>
</gene>
<comment type="function">
    <text evidence="1">Catalyzes the initial step of the lipid cycle reactions in the biosynthesis of the cell wall peptidoglycan: transfers peptidoglycan precursor phospho-MurNAc-pentapeptide from UDP-MurNAc-pentapeptide onto the lipid carrier undecaprenyl phosphate, yielding undecaprenyl-pyrophosphoryl-MurNAc-pentapeptide, known as lipid I.</text>
</comment>
<comment type="catalytic activity">
    <reaction evidence="1">
        <text>UDP-N-acetyl-alpha-D-muramoyl-L-alanyl-gamma-D-glutamyl-meso-2,6-diaminopimeloyl-D-alanyl-D-alanine + di-trans,octa-cis-undecaprenyl phosphate = di-trans,octa-cis-undecaprenyl diphospho-N-acetyl-alpha-D-muramoyl-L-alanyl-D-glutamyl-meso-2,6-diaminopimeloyl-D-alanyl-D-alanine + UMP</text>
        <dbReference type="Rhea" id="RHEA:28386"/>
        <dbReference type="ChEBI" id="CHEBI:57865"/>
        <dbReference type="ChEBI" id="CHEBI:60392"/>
        <dbReference type="ChEBI" id="CHEBI:61386"/>
        <dbReference type="ChEBI" id="CHEBI:61387"/>
        <dbReference type="EC" id="2.7.8.13"/>
    </reaction>
</comment>
<comment type="cofactor">
    <cofactor evidence="1">
        <name>Mg(2+)</name>
        <dbReference type="ChEBI" id="CHEBI:18420"/>
    </cofactor>
</comment>
<comment type="pathway">
    <text evidence="1">Cell wall biogenesis; peptidoglycan biosynthesis.</text>
</comment>
<comment type="subcellular location">
    <subcellularLocation>
        <location evidence="1">Cell membrane</location>
        <topology evidence="1">Multi-pass membrane protein</topology>
    </subcellularLocation>
</comment>
<comment type="similarity">
    <text evidence="1">Belongs to the glycosyltransferase 4 family. MraY subfamily.</text>
</comment>
<sequence length="356" mass="38372">MRQILFAGAIGLFLTLVGTPLLIKLLARKGYGQFIRDDGPRTHGSKKGTPTMGGIAFILATIVAYLLAKVITGEDIRYSGLLVLFLMAGMGLVGFLDDYIKIVKQRSLGLRAKAKMAGQLIVGIAFAVLSLQFPNSMNYTPASTRLSFVEDFGWSIGPVLFCVWALFMILAMSNGVNLTDGLDGLATGASVMVFGAYTFIGLWQFQESCANADNLTNPSACYEVRDPLDLAVVAAALMGACFGFLWWNTSPAKIFMGDTGSLALGGALAGLAILSRTEFLLAILGGLFVMITMSVVIQVGSFKMTGKRVFRMAPLQHHFELKGWSEVLVVVRFWIIQGMCVIVGLGLFYAGWAAKK</sequence>
<organism>
    <name type="scientific">Streptomyces griseus subsp. griseus (strain JCM 4626 / CBS 651.72 / NBRC 13350 / KCC S-0626 / ISP 5235)</name>
    <dbReference type="NCBI Taxonomy" id="455632"/>
    <lineage>
        <taxon>Bacteria</taxon>
        <taxon>Bacillati</taxon>
        <taxon>Actinomycetota</taxon>
        <taxon>Actinomycetes</taxon>
        <taxon>Kitasatosporales</taxon>
        <taxon>Streptomycetaceae</taxon>
        <taxon>Streptomyces</taxon>
    </lineage>
</organism>
<dbReference type="EC" id="2.7.8.13" evidence="1"/>
<dbReference type="EMBL" id="AP009493">
    <property type="protein sequence ID" value="BAG22247.1"/>
    <property type="molecule type" value="Genomic_DNA"/>
</dbReference>
<dbReference type="RefSeq" id="WP_003969702.1">
    <property type="nucleotide sequence ID" value="NC_010572.1"/>
</dbReference>
<dbReference type="SMR" id="B1W0I7"/>
<dbReference type="KEGG" id="sgr:SGR_5418"/>
<dbReference type="eggNOG" id="COG0472">
    <property type="taxonomic scope" value="Bacteria"/>
</dbReference>
<dbReference type="HOGENOM" id="CLU_023982_0_1_11"/>
<dbReference type="UniPathway" id="UPA00219"/>
<dbReference type="Proteomes" id="UP000001685">
    <property type="component" value="Chromosome"/>
</dbReference>
<dbReference type="GO" id="GO:0005886">
    <property type="term" value="C:plasma membrane"/>
    <property type="evidence" value="ECO:0007669"/>
    <property type="project" value="UniProtKB-SubCell"/>
</dbReference>
<dbReference type="GO" id="GO:0046872">
    <property type="term" value="F:metal ion binding"/>
    <property type="evidence" value="ECO:0007669"/>
    <property type="project" value="UniProtKB-KW"/>
</dbReference>
<dbReference type="GO" id="GO:0008963">
    <property type="term" value="F:phospho-N-acetylmuramoyl-pentapeptide-transferase activity"/>
    <property type="evidence" value="ECO:0007669"/>
    <property type="project" value="UniProtKB-UniRule"/>
</dbReference>
<dbReference type="GO" id="GO:0051992">
    <property type="term" value="F:UDP-N-acetylmuramoyl-L-alanyl-D-glutamyl-meso-2,6-diaminopimelyl-D-alanyl-D-alanine:undecaprenyl-phosphate transferase activity"/>
    <property type="evidence" value="ECO:0007669"/>
    <property type="project" value="RHEA"/>
</dbReference>
<dbReference type="GO" id="GO:0051301">
    <property type="term" value="P:cell division"/>
    <property type="evidence" value="ECO:0007669"/>
    <property type="project" value="UniProtKB-KW"/>
</dbReference>
<dbReference type="GO" id="GO:0071555">
    <property type="term" value="P:cell wall organization"/>
    <property type="evidence" value="ECO:0007669"/>
    <property type="project" value="UniProtKB-KW"/>
</dbReference>
<dbReference type="GO" id="GO:0009252">
    <property type="term" value="P:peptidoglycan biosynthetic process"/>
    <property type="evidence" value="ECO:0007669"/>
    <property type="project" value="UniProtKB-UniRule"/>
</dbReference>
<dbReference type="GO" id="GO:0008360">
    <property type="term" value="P:regulation of cell shape"/>
    <property type="evidence" value="ECO:0007669"/>
    <property type="project" value="UniProtKB-KW"/>
</dbReference>
<dbReference type="CDD" id="cd06852">
    <property type="entry name" value="GT_MraY"/>
    <property type="match status" value="1"/>
</dbReference>
<dbReference type="HAMAP" id="MF_00038">
    <property type="entry name" value="MraY"/>
    <property type="match status" value="1"/>
</dbReference>
<dbReference type="InterPro" id="IPR000715">
    <property type="entry name" value="Glycosyl_transferase_4"/>
</dbReference>
<dbReference type="InterPro" id="IPR003524">
    <property type="entry name" value="PNAcMuramoyl-5peptid_Trfase"/>
</dbReference>
<dbReference type="InterPro" id="IPR018480">
    <property type="entry name" value="PNAcMuramoyl-5peptid_Trfase_CS"/>
</dbReference>
<dbReference type="NCBIfam" id="TIGR00445">
    <property type="entry name" value="mraY"/>
    <property type="match status" value="1"/>
</dbReference>
<dbReference type="PANTHER" id="PTHR22926">
    <property type="entry name" value="PHOSPHO-N-ACETYLMURAMOYL-PENTAPEPTIDE-TRANSFERASE"/>
    <property type="match status" value="1"/>
</dbReference>
<dbReference type="PANTHER" id="PTHR22926:SF5">
    <property type="entry name" value="PHOSPHO-N-ACETYLMURAMOYL-PENTAPEPTIDE-TRANSFERASE HOMOLOG"/>
    <property type="match status" value="1"/>
</dbReference>
<dbReference type="Pfam" id="PF00953">
    <property type="entry name" value="Glycos_transf_4"/>
    <property type="match status" value="1"/>
</dbReference>
<dbReference type="Pfam" id="PF10555">
    <property type="entry name" value="MraY_sig1"/>
    <property type="match status" value="1"/>
</dbReference>
<dbReference type="PROSITE" id="PS01347">
    <property type="entry name" value="MRAY_1"/>
    <property type="match status" value="1"/>
</dbReference>
<dbReference type="PROSITE" id="PS01348">
    <property type="entry name" value="MRAY_2"/>
    <property type="match status" value="1"/>
</dbReference>
<protein>
    <recommendedName>
        <fullName evidence="1">Phospho-N-acetylmuramoyl-pentapeptide-transferase</fullName>
        <ecNumber evidence="1">2.7.8.13</ecNumber>
    </recommendedName>
    <alternativeName>
        <fullName evidence="1">UDP-MurNAc-pentapeptide phosphotransferase</fullName>
    </alternativeName>
</protein>
<evidence type="ECO:0000255" key="1">
    <source>
        <dbReference type="HAMAP-Rule" id="MF_00038"/>
    </source>
</evidence>
<proteinExistence type="inferred from homology"/>
<feature type="chain" id="PRO_1000090675" description="Phospho-N-acetylmuramoyl-pentapeptide-transferase">
    <location>
        <begin position="1"/>
        <end position="356"/>
    </location>
</feature>
<feature type="transmembrane region" description="Helical" evidence="1">
    <location>
        <begin position="3"/>
        <end position="23"/>
    </location>
</feature>
<feature type="transmembrane region" description="Helical" evidence="1">
    <location>
        <begin position="51"/>
        <end position="71"/>
    </location>
</feature>
<feature type="transmembrane region" description="Helical" evidence="1">
    <location>
        <begin position="80"/>
        <end position="100"/>
    </location>
</feature>
<feature type="transmembrane region" description="Helical" evidence="1">
    <location>
        <begin position="114"/>
        <end position="134"/>
    </location>
</feature>
<feature type="transmembrane region" description="Helical" evidence="1">
    <location>
        <begin position="152"/>
        <end position="172"/>
    </location>
</feature>
<feature type="transmembrane region" description="Helical" evidence="1">
    <location>
        <begin position="185"/>
        <end position="205"/>
    </location>
</feature>
<feature type="transmembrane region" description="Helical" evidence="1">
    <location>
        <begin position="227"/>
        <end position="247"/>
    </location>
</feature>
<feature type="transmembrane region" description="Helical" evidence="1">
    <location>
        <begin position="254"/>
        <end position="274"/>
    </location>
</feature>
<feature type="transmembrane region" description="Helical" evidence="1">
    <location>
        <begin position="279"/>
        <end position="299"/>
    </location>
</feature>
<feature type="transmembrane region" description="Helical" evidence="1">
    <location>
        <begin position="333"/>
        <end position="353"/>
    </location>
</feature>
<accession>B1W0I7</accession>
<reference key="1">
    <citation type="journal article" date="2008" name="J. Bacteriol.">
        <title>Genome sequence of the streptomycin-producing microorganism Streptomyces griseus IFO 13350.</title>
        <authorList>
            <person name="Ohnishi Y."/>
            <person name="Ishikawa J."/>
            <person name="Hara H."/>
            <person name="Suzuki H."/>
            <person name="Ikenoya M."/>
            <person name="Ikeda H."/>
            <person name="Yamashita A."/>
            <person name="Hattori M."/>
            <person name="Horinouchi S."/>
        </authorList>
    </citation>
    <scope>NUCLEOTIDE SEQUENCE [LARGE SCALE GENOMIC DNA]</scope>
    <source>
        <strain>JCM 4626 / CBS 651.72 / NBRC 13350 / KCC S-0626 / ISP 5235</strain>
    </source>
</reference>
<name>MRAY_STRGG</name>
<keyword id="KW-0131">Cell cycle</keyword>
<keyword id="KW-0132">Cell division</keyword>
<keyword id="KW-1003">Cell membrane</keyword>
<keyword id="KW-0133">Cell shape</keyword>
<keyword id="KW-0961">Cell wall biogenesis/degradation</keyword>
<keyword id="KW-0460">Magnesium</keyword>
<keyword id="KW-0472">Membrane</keyword>
<keyword id="KW-0479">Metal-binding</keyword>
<keyword id="KW-0573">Peptidoglycan synthesis</keyword>
<keyword id="KW-0808">Transferase</keyword>
<keyword id="KW-0812">Transmembrane</keyword>
<keyword id="KW-1133">Transmembrane helix</keyword>